<dbReference type="EMBL" id="CR382138">
    <property type="protein sequence ID" value="CAG89429.2"/>
    <property type="status" value="ALT_INIT"/>
    <property type="molecule type" value="Genomic_DNA"/>
</dbReference>
<dbReference type="RefSeq" id="XP_461053.2">
    <property type="nucleotide sequence ID" value="XM_461053.2"/>
</dbReference>
<dbReference type="FunCoup" id="Q6BL68">
    <property type="interactions" value="3"/>
</dbReference>
<dbReference type="STRING" id="284592.Q6BL68"/>
<dbReference type="GeneID" id="2904005"/>
<dbReference type="KEGG" id="dha:DEHA2F15972g"/>
<dbReference type="eggNOG" id="KOG4774">
    <property type="taxonomic scope" value="Eukaryota"/>
</dbReference>
<dbReference type="HOGENOM" id="CLU_066684_2_0_1"/>
<dbReference type="InParanoid" id="Q6BL68"/>
<dbReference type="OrthoDB" id="20086at2759"/>
<dbReference type="Proteomes" id="UP000000599">
    <property type="component" value="Chromosome F"/>
</dbReference>
<dbReference type="GO" id="GO:0005737">
    <property type="term" value="C:cytoplasm"/>
    <property type="evidence" value="ECO:0007669"/>
    <property type="project" value="UniProtKB-SubCell"/>
</dbReference>
<dbReference type="GO" id="GO:0005634">
    <property type="term" value="C:nucleus"/>
    <property type="evidence" value="ECO:0007669"/>
    <property type="project" value="UniProtKB-SubCell"/>
</dbReference>
<dbReference type="GO" id="GO:0051604">
    <property type="term" value="P:protein maturation"/>
    <property type="evidence" value="ECO:0000250"/>
    <property type="project" value="UniProtKB"/>
</dbReference>
<dbReference type="InterPro" id="IPR019191">
    <property type="entry name" value="Essential_protein_Yae1_N"/>
</dbReference>
<dbReference type="InterPro" id="IPR038881">
    <property type="entry name" value="Yae1-like"/>
</dbReference>
<dbReference type="PANTHER" id="PTHR18829">
    <property type="entry name" value="PROTEIN YAE1 HOMOLOG"/>
    <property type="match status" value="1"/>
</dbReference>
<dbReference type="PANTHER" id="PTHR18829:SF0">
    <property type="entry name" value="PROTEIN YAE1 HOMOLOG"/>
    <property type="match status" value="1"/>
</dbReference>
<dbReference type="Pfam" id="PF09811">
    <property type="entry name" value="Yae1_N"/>
    <property type="match status" value="1"/>
</dbReference>
<feature type="chain" id="PRO_0000324426" description="Protein YAE1">
    <location>
        <begin position="1"/>
        <end position="153"/>
    </location>
</feature>
<feature type="region of interest" description="deca-GX3 motif; required for interaction with LTO1" evidence="1">
    <location>
        <begin position="60"/>
        <end position="100"/>
    </location>
</feature>
<accession>Q6BL68</accession>
<protein>
    <recommendedName>
        <fullName>Protein YAE1</fullName>
    </recommendedName>
</protein>
<reference key="1">
    <citation type="journal article" date="2004" name="Nature">
        <title>Genome evolution in yeasts.</title>
        <authorList>
            <person name="Dujon B."/>
            <person name="Sherman D."/>
            <person name="Fischer G."/>
            <person name="Durrens P."/>
            <person name="Casaregola S."/>
            <person name="Lafontaine I."/>
            <person name="de Montigny J."/>
            <person name="Marck C."/>
            <person name="Neuveglise C."/>
            <person name="Talla E."/>
            <person name="Goffard N."/>
            <person name="Frangeul L."/>
            <person name="Aigle M."/>
            <person name="Anthouard V."/>
            <person name="Babour A."/>
            <person name="Barbe V."/>
            <person name="Barnay S."/>
            <person name="Blanchin S."/>
            <person name="Beckerich J.-M."/>
            <person name="Beyne E."/>
            <person name="Bleykasten C."/>
            <person name="Boisrame A."/>
            <person name="Boyer J."/>
            <person name="Cattolico L."/>
            <person name="Confanioleri F."/>
            <person name="de Daruvar A."/>
            <person name="Despons L."/>
            <person name="Fabre E."/>
            <person name="Fairhead C."/>
            <person name="Ferry-Dumazet H."/>
            <person name="Groppi A."/>
            <person name="Hantraye F."/>
            <person name="Hennequin C."/>
            <person name="Jauniaux N."/>
            <person name="Joyet P."/>
            <person name="Kachouri R."/>
            <person name="Kerrest A."/>
            <person name="Koszul R."/>
            <person name="Lemaire M."/>
            <person name="Lesur I."/>
            <person name="Ma L."/>
            <person name="Muller H."/>
            <person name="Nicaud J.-M."/>
            <person name="Nikolski M."/>
            <person name="Oztas S."/>
            <person name="Ozier-Kalogeropoulos O."/>
            <person name="Pellenz S."/>
            <person name="Potier S."/>
            <person name="Richard G.-F."/>
            <person name="Straub M.-L."/>
            <person name="Suleau A."/>
            <person name="Swennen D."/>
            <person name="Tekaia F."/>
            <person name="Wesolowski-Louvel M."/>
            <person name="Westhof E."/>
            <person name="Wirth B."/>
            <person name="Zeniou-Meyer M."/>
            <person name="Zivanovic Y."/>
            <person name="Bolotin-Fukuhara M."/>
            <person name="Thierry A."/>
            <person name="Bouchier C."/>
            <person name="Caudron B."/>
            <person name="Scarpelli C."/>
            <person name="Gaillardin C."/>
            <person name="Weissenbach J."/>
            <person name="Wincker P."/>
            <person name="Souciet J.-L."/>
        </authorList>
    </citation>
    <scope>NUCLEOTIDE SEQUENCE [LARGE SCALE GENOMIC DNA]</scope>
    <source>
        <strain>ATCC 36239 / CBS 767 / BCRC 21394 / JCM 1990 / NBRC 0083 / IGC 2968</strain>
    </source>
</reference>
<name>YAE1_DEBHA</name>
<keyword id="KW-0963">Cytoplasm</keyword>
<keyword id="KW-0539">Nucleus</keyword>
<keyword id="KW-1185">Reference proteome</keyword>
<sequence>MSSKCNGDCSCTSKVDSGVADKTEMTKNESNDIDDIWGDDDIEELDNSTADIKRMHSKQGYLDGITSAKESSLQDGFDDSFPKGAELGIIVGNILGSLISYDDQELFDQAKSELNISQVLHKRYFDEDLELRSTNDHEVIAKWQNVVQNLENK</sequence>
<proteinExistence type="inferred from homology"/>
<evidence type="ECO:0000250" key="1">
    <source>
        <dbReference type="UniProtKB" id="P47118"/>
    </source>
</evidence>
<evidence type="ECO:0000250" key="2">
    <source>
        <dbReference type="UniProtKB" id="Q9NRH1"/>
    </source>
</evidence>
<evidence type="ECO:0000305" key="3"/>
<organism>
    <name type="scientific">Debaryomyces hansenii (strain ATCC 36239 / CBS 767 / BCRC 21394 / JCM 1990 / NBRC 0083 / IGC 2968)</name>
    <name type="common">Yeast</name>
    <name type="synonym">Torulaspora hansenii</name>
    <dbReference type="NCBI Taxonomy" id="284592"/>
    <lineage>
        <taxon>Eukaryota</taxon>
        <taxon>Fungi</taxon>
        <taxon>Dikarya</taxon>
        <taxon>Ascomycota</taxon>
        <taxon>Saccharomycotina</taxon>
        <taxon>Pichiomycetes</taxon>
        <taxon>Debaryomycetaceae</taxon>
        <taxon>Debaryomyces</taxon>
    </lineage>
</organism>
<gene>
    <name type="primary">YAE1</name>
    <name type="ordered locus">DEHA2F15972g</name>
</gene>
<comment type="function">
    <text evidence="2">The complex LTO1:YAE1 may function as a target specific adapter that probably recruits apo-RPLI1 to the cytosolic iron-sulfur protein assembly (CIA) complex machinery. May be required for biogenesis of the large ribosomal subunit and initiation of translation.</text>
</comment>
<comment type="subunit">
    <text evidence="2">May form a complex with LTO1.</text>
</comment>
<comment type="subcellular location">
    <subcellularLocation>
        <location evidence="1">Cytoplasm</location>
    </subcellularLocation>
    <subcellularLocation>
        <location evidence="1">Nucleus</location>
    </subcellularLocation>
</comment>
<comment type="similarity">
    <text evidence="3">Belongs to the YAE1 family.</text>
</comment>
<comment type="sequence caution" evidence="3">
    <conflict type="erroneous initiation">
        <sequence resource="EMBL-CDS" id="CAG89429"/>
    </conflict>
    <text>Truncated N-terminus.</text>
</comment>